<dbReference type="EMBL" id="CP000096">
    <property type="protein sequence ID" value="ABB23076.1"/>
    <property type="molecule type" value="Genomic_DNA"/>
</dbReference>
<dbReference type="RefSeq" id="WP_011356952.1">
    <property type="nucleotide sequence ID" value="NC_007512.1"/>
</dbReference>
<dbReference type="SMR" id="Q3B6F5"/>
<dbReference type="STRING" id="319225.Plut_0188"/>
<dbReference type="KEGG" id="plt:Plut_0188"/>
<dbReference type="eggNOG" id="COG0197">
    <property type="taxonomic scope" value="Bacteria"/>
</dbReference>
<dbReference type="HOGENOM" id="CLU_078858_2_1_10"/>
<dbReference type="OrthoDB" id="9802589at2"/>
<dbReference type="Proteomes" id="UP000002709">
    <property type="component" value="Chromosome"/>
</dbReference>
<dbReference type="GO" id="GO:0022625">
    <property type="term" value="C:cytosolic large ribosomal subunit"/>
    <property type="evidence" value="ECO:0007669"/>
    <property type="project" value="TreeGrafter"/>
</dbReference>
<dbReference type="GO" id="GO:0019843">
    <property type="term" value="F:rRNA binding"/>
    <property type="evidence" value="ECO:0007669"/>
    <property type="project" value="UniProtKB-UniRule"/>
</dbReference>
<dbReference type="GO" id="GO:0003735">
    <property type="term" value="F:structural constituent of ribosome"/>
    <property type="evidence" value="ECO:0007669"/>
    <property type="project" value="InterPro"/>
</dbReference>
<dbReference type="GO" id="GO:0000049">
    <property type="term" value="F:tRNA binding"/>
    <property type="evidence" value="ECO:0007669"/>
    <property type="project" value="UniProtKB-KW"/>
</dbReference>
<dbReference type="GO" id="GO:0006412">
    <property type="term" value="P:translation"/>
    <property type="evidence" value="ECO:0007669"/>
    <property type="project" value="UniProtKB-UniRule"/>
</dbReference>
<dbReference type="CDD" id="cd01433">
    <property type="entry name" value="Ribosomal_L16_L10e"/>
    <property type="match status" value="1"/>
</dbReference>
<dbReference type="FunFam" id="3.90.1170.10:FF:000001">
    <property type="entry name" value="50S ribosomal protein L16"/>
    <property type="match status" value="1"/>
</dbReference>
<dbReference type="Gene3D" id="3.90.1170.10">
    <property type="entry name" value="Ribosomal protein L10e/L16"/>
    <property type="match status" value="1"/>
</dbReference>
<dbReference type="HAMAP" id="MF_01342">
    <property type="entry name" value="Ribosomal_uL16"/>
    <property type="match status" value="1"/>
</dbReference>
<dbReference type="InterPro" id="IPR047873">
    <property type="entry name" value="Ribosomal_uL16"/>
</dbReference>
<dbReference type="InterPro" id="IPR000114">
    <property type="entry name" value="Ribosomal_uL16_bact-type"/>
</dbReference>
<dbReference type="InterPro" id="IPR020798">
    <property type="entry name" value="Ribosomal_uL16_CS"/>
</dbReference>
<dbReference type="InterPro" id="IPR016180">
    <property type="entry name" value="Ribosomal_uL16_dom"/>
</dbReference>
<dbReference type="InterPro" id="IPR036920">
    <property type="entry name" value="Ribosomal_uL16_sf"/>
</dbReference>
<dbReference type="NCBIfam" id="TIGR01164">
    <property type="entry name" value="rplP_bact"/>
    <property type="match status" value="1"/>
</dbReference>
<dbReference type="PANTHER" id="PTHR12220">
    <property type="entry name" value="50S/60S RIBOSOMAL PROTEIN L16"/>
    <property type="match status" value="1"/>
</dbReference>
<dbReference type="PANTHER" id="PTHR12220:SF13">
    <property type="entry name" value="LARGE RIBOSOMAL SUBUNIT PROTEIN UL16M"/>
    <property type="match status" value="1"/>
</dbReference>
<dbReference type="Pfam" id="PF00252">
    <property type="entry name" value="Ribosomal_L16"/>
    <property type="match status" value="1"/>
</dbReference>
<dbReference type="PRINTS" id="PR00060">
    <property type="entry name" value="RIBOSOMALL16"/>
</dbReference>
<dbReference type="SUPFAM" id="SSF54686">
    <property type="entry name" value="Ribosomal protein L16p/L10e"/>
    <property type="match status" value="1"/>
</dbReference>
<dbReference type="PROSITE" id="PS00586">
    <property type="entry name" value="RIBOSOMAL_L16_1"/>
    <property type="match status" value="1"/>
</dbReference>
<dbReference type="PROSITE" id="PS00701">
    <property type="entry name" value="RIBOSOMAL_L16_2"/>
    <property type="match status" value="1"/>
</dbReference>
<organism>
    <name type="scientific">Chlorobium luteolum (strain DSM 273 / BCRC 81028 / 2530)</name>
    <name type="common">Pelodictyon luteolum</name>
    <dbReference type="NCBI Taxonomy" id="319225"/>
    <lineage>
        <taxon>Bacteria</taxon>
        <taxon>Pseudomonadati</taxon>
        <taxon>Chlorobiota</taxon>
        <taxon>Chlorobiia</taxon>
        <taxon>Chlorobiales</taxon>
        <taxon>Chlorobiaceae</taxon>
        <taxon>Chlorobium/Pelodictyon group</taxon>
        <taxon>Pelodictyon</taxon>
    </lineage>
</organism>
<comment type="function">
    <text evidence="1">Binds 23S rRNA and is also seen to make contacts with the A and possibly P site tRNAs.</text>
</comment>
<comment type="subunit">
    <text evidence="1">Part of the 50S ribosomal subunit.</text>
</comment>
<comment type="similarity">
    <text evidence="1">Belongs to the universal ribosomal protein uL16 family.</text>
</comment>
<protein>
    <recommendedName>
        <fullName evidence="1">Large ribosomal subunit protein uL16</fullName>
    </recommendedName>
    <alternativeName>
        <fullName evidence="2">50S ribosomal protein L16</fullName>
    </alternativeName>
</protein>
<keyword id="KW-1185">Reference proteome</keyword>
<keyword id="KW-0687">Ribonucleoprotein</keyword>
<keyword id="KW-0689">Ribosomal protein</keyword>
<keyword id="KW-0694">RNA-binding</keyword>
<keyword id="KW-0699">rRNA-binding</keyword>
<keyword id="KW-0820">tRNA-binding</keyword>
<sequence length="139" mass="15677">MLMPKRVKYRKTQRGRMKGNAGRGTSVAFGSFGLKAIEPAWITSRQIEAARVAMNRYMKRDGKIWIRIFPDKPVSKKAAETRMGSGKGSPEFWVAVVKPGRIMFEADGVPMEVATEAFRLAAKKLPIKTRFIVRPDYEA</sequence>
<evidence type="ECO:0000255" key="1">
    <source>
        <dbReference type="HAMAP-Rule" id="MF_01342"/>
    </source>
</evidence>
<evidence type="ECO:0000305" key="2"/>
<reference key="1">
    <citation type="submission" date="2005-08" db="EMBL/GenBank/DDBJ databases">
        <title>Complete sequence of Pelodictyon luteolum DSM 273.</title>
        <authorList>
            <consortium name="US DOE Joint Genome Institute"/>
            <person name="Copeland A."/>
            <person name="Lucas S."/>
            <person name="Lapidus A."/>
            <person name="Barry K."/>
            <person name="Detter J.C."/>
            <person name="Glavina T."/>
            <person name="Hammon N."/>
            <person name="Israni S."/>
            <person name="Pitluck S."/>
            <person name="Bryant D."/>
            <person name="Schmutz J."/>
            <person name="Larimer F."/>
            <person name="Land M."/>
            <person name="Kyrpides N."/>
            <person name="Ivanova N."/>
            <person name="Richardson P."/>
        </authorList>
    </citation>
    <scope>NUCLEOTIDE SEQUENCE [LARGE SCALE GENOMIC DNA]</scope>
    <source>
        <strain>DSM 273 / BCRC 81028 / 2530</strain>
    </source>
</reference>
<feature type="chain" id="PRO_0000251653" description="Large ribosomal subunit protein uL16">
    <location>
        <begin position="1"/>
        <end position="139"/>
    </location>
</feature>
<gene>
    <name evidence="1" type="primary">rplP</name>
    <name type="ordered locus">Plut_0188</name>
</gene>
<accession>Q3B6F5</accession>
<proteinExistence type="inferred from homology"/>
<name>RL16_CHLL3</name>